<organism>
    <name type="scientific">Escherichia coli (strain SE11)</name>
    <dbReference type="NCBI Taxonomy" id="409438"/>
    <lineage>
        <taxon>Bacteria</taxon>
        <taxon>Pseudomonadati</taxon>
        <taxon>Pseudomonadota</taxon>
        <taxon>Gammaproteobacteria</taxon>
        <taxon>Enterobacterales</taxon>
        <taxon>Enterobacteriaceae</taxon>
        <taxon>Escherichia</taxon>
    </lineage>
</organism>
<accession>B6IBU0</accession>
<reference key="1">
    <citation type="journal article" date="2008" name="DNA Res.">
        <title>Complete genome sequence and comparative analysis of the wild-type commensal Escherichia coli strain SE11 isolated from a healthy adult.</title>
        <authorList>
            <person name="Oshima K."/>
            <person name="Toh H."/>
            <person name="Ogura Y."/>
            <person name="Sasamoto H."/>
            <person name="Morita H."/>
            <person name="Park S.-H."/>
            <person name="Ooka T."/>
            <person name="Iyoda S."/>
            <person name="Taylor T.D."/>
            <person name="Hayashi T."/>
            <person name="Itoh K."/>
            <person name="Hattori M."/>
        </authorList>
    </citation>
    <scope>NUCLEOTIDE SEQUENCE [LARGE SCALE GENOMIC DNA]</scope>
    <source>
        <strain>SE11</strain>
    </source>
</reference>
<sequence>MIGRLRGIIIEKQPPLVLIEVGGVGYEVHMPMTCFYELPEAGQEAIVFTHFVVREDAQLLYGFNNKQERTLFKELIKTNGVGPKLALAILSGMSAQQFVNAVEREEVGALVKLPGIGKKTAERLIVEMKDRFKGLHGDLFTPAADLVLTSPASPATDDAEQEAVAALVALGYKPQEASRMVSKIARPDASSETLIREALRAAL</sequence>
<gene>
    <name evidence="1" type="primary">ruvA</name>
    <name type="ordered locus">ECSE_2037</name>
</gene>
<keyword id="KW-0963">Cytoplasm</keyword>
<keyword id="KW-0227">DNA damage</keyword>
<keyword id="KW-0233">DNA recombination</keyword>
<keyword id="KW-0234">DNA repair</keyword>
<keyword id="KW-0238">DNA-binding</keyword>
<keyword id="KW-0742">SOS response</keyword>
<comment type="function">
    <text evidence="1">The RuvA-RuvB-RuvC complex processes Holliday junction (HJ) DNA during genetic recombination and DNA repair, while the RuvA-RuvB complex plays an important role in the rescue of blocked DNA replication forks via replication fork reversal (RFR). RuvA specifically binds to HJ cruciform DNA, conferring on it an open structure. The RuvB hexamer acts as an ATP-dependent pump, pulling dsDNA into and through the RuvAB complex. HJ branch migration allows RuvC to scan DNA until it finds its consensus sequence, where it cleaves and resolves the cruciform DNA.</text>
</comment>
<comment type="subunit">
    <text evidence="1">Homotetramer. Forms an RuvA(8)-RuvB(12)-Holliday junction (HJ) complex. HJ DNA is sandwiched between 2 RuvA tetramers; dsDNA enters through RuvA and exits via RuvB. An RuvB hexamer assembles on each DNA strand where it exits the tetramer. Each RuvB hexamer is contacted by two RuvA subunits (via domain III) on 2 adjacent RuvB subunits; this complex drives branch migration. In the full resolvosome a probable DNA-RuvA(4)-RuvB(12)-RuvC(2) complex forms which resolves the HJ.</text>
</comment>
<comment type="subcellular location">
    <subcellularLocation>
        <location evidence="1">Cytoplasm</location>
    </subcellularLocation>
</comment>
<comment type="domain">
    <text evidence="1">Has three domains with a flexible linker between the domains II and III and assumes an 'L' shape. Domain III is highly mobile and contacts RuvB.</text>
</comment>
<comment type="similarity">
    <text evidence="1">Belongs to the RuvA family.</text>
</comment>
<proteinExistence type="inferred from homology"/>
<dbReference type="EMBL" id="AP009240">
    <property type="protein sequence ID" value="BAG77561.1"/>
    <property type="molecule type" value="Genomic_DNA"/>
</dbReference>
<dbReference type="RefSeq" id="WP_000580323.1">
    <property type="nucleotide sequence ID" value="NC_011415.1"/>
</dbReference>
<dbReference type="SMR" id="B6IBU0"/>
<dbReference type="GeneID" id="75057740"/>
<dbReference type="KEGG" id="ecy:ECSE_2037"/>
<dbReference type="HOGENOM" id="CLU_087936_0_0_6"/>
<dbReference type="Proteomes" id="UP000008199">
    <property type="component" value="Chromosome"/>
</dbReference>
<dbReference type="GO" id="GO:0005737">
    <property type="term" value="C:cytoplasm"/>
    <property type="evidence" value="ECO:0007669"/>
    <property type="project" value="UniProtKB-SubCell"/>
</dbReference>
<dbReference type="GO" id="GO:0009379">
    <property type="term" value="C:Holliday junction helicase complex"/>
    <property type="evidence" value="ECO:0007669"/>
    <property type="project" value="InterPro"/>
</dbReference>
<dbReference type="GO" id="GO:0048476">
    <property type="term" value="C:Holliday junction resolvase complex"/>
    <property type="evidence" value="ECO:0007669"/>
    <property type="project" value="UniProtKB-UniRule"/>
</dbReference>
<dbReference type="GO" id="GO:0005524">
    <property type="term" value="F:ATP binding"/>
    <property type="evidence" value="ECO:0007669"/>
    <property type="project" value="InterPro"/>
</dbReference>
<dbReference type="GO" id="GO:0000400">
    <property type="term" value="F:four-way junction DNA binding"/>
    <property type="evidence" value="ECO:0007669"/>
    <property type="project" value="UniProtKB-UniRule"/>
</dbReference>
<dbReference type="GO" id="GO:0009378">
    <property type="term" value="F:four-way junction helicase activity"/>
    <property type="evidence" value="ECO:0007669"/>
    <property type="project" value="InterPro"/>
</dbReference>
<dbReference type="GO" id="GO:0006310">
    <property type="term" value="P:DNA recombination"/>
    <property type="evidence" value="ECO:0007669"/>
    <property type="project" value="UniProtKB-UniRule"/>
</dbReference>
<dbReference type="GO" id="GO:0006281">
    <property type="term" value="P:DNA repair"/>
    <property type="evidence" value="ECO:0007669"/>
    <property type="project" value="UniProtKB-UniRule"/>
</dbReference>
<dbReference type="GO" id="GO:0009432">
    <property type="term" value="P:SOS response"/>
    <property type="evidence" value="ECO:0007669"/>
    <property type="project" value="UniProtKB-UniRule"/>
</dbReference>
<dbReference type="CDD" id="cd14332">
    <property type="entry name" value="UBA_RuvA_C"/>
    <property type="match status" value="1"/>
</dbReference>
<dbReference type="FunFam" id="1.10.150.20:FF:000012">
    <property type="entry name" value="Holliday junction ATP-dependent DNA helicase RuvA"/>
    <property type="match status" value="1"/>
</dbReference>
<dbReference type="FunFam" id="1.10.8.10:FF:000008">
    <property type="entry name" value="Holliday junction ATP-dependent DNA helicase RuvA"/>
    <property type="match status" value="1"/>
</dbReference>
<dbReference type="FunFam" id="2.40.50.140:FF:000083">
    <property type="entry name" value="Holliday junction ATP-dependent DNA helicase RuvA"/>
    <property type="match status" value="1"/>
</dbReference>
<dbReference type="Gene3D" id="1.10.150.20">
    <property type="entry name" value="5' to 3' exonuclease, C-terminal subdomain"/>
    <property type="match status" value="1"/>
</dbReference>
<dbReference type="Gene3D" id="1.10.8.10">
    <property type="entry name" value="DNA helicase RuvA subunit, C-terminal domain"/>
    <property type="match status" value="1"/>
</dbReference>
<dbReference type="Gene3D" id="2.40.50.140">
    <property type="entry name" value="Nucleic acid-binding proteins"/>
    <property type="match status" value="1"/>
</dbReference>
<dbReference type="HAMAP" id="MF_00031">
    <property type="entry name" value="DNA_HJ_migration_RuvA"/>
    <property type="match status" value="1"/>
</dbReference>
<dbReference type="InterPro" id="IPR013849">
    <property type="entry name" value="DNA_helicase_Holl-junc_RuvA_I"/>
</dbReference>
<dbReference type="InterPro" id="IPR003583">
    <property type="entry name" value="Hlx-hairpin-Hlx_DNA-bd_motif"/>
</dbReference>
<dbReference type="InterPro" id="IPR012340">
    <property type="entry name" value="NA-bd_OB-fold"/>
</dbReference>
<dbReference type="InterPro" id="IPR000085">
    <property type="entry name" value="RuvA"/>
</dbReference>
<dbReference type="InterPro" id="IPR010994">
    <property type="entry name" value="RuvA_2-like"/>
</dbReference>
<dbReference type="InterPro" id="IPR011114">
    <property type="entry name" value="RuvA_C"/>
</dbReference>
<dbReference type="InterPro" id="IPR036267">
    <property type="entry name" value="RuvA_C_sf"/>
</dbReference>
<dbReference type="NCBIfam" id="TIGR00084">
    <property type="entry name" value="ruvA"/>
    <property type="match status" value="1"/>
</dbReference>
<dbReference type="Pfam" id="PF14520">
    <property type="entry name" value="HHH_5"/>
    <property type="match status" value="1"/>
</dbReference>
<dbReference type="Pfam" id="PF07499">
    <property type="entry name" value="RuvA_C"/>
    <property type="match status" value="1"/>
</dbReference>
<dbReference type="Pfam" id="PF01330">
    <property type="entry name" value="RuvA_N"/>
    <property type="match status" value="1"/>
</dbReference>
<dbReference type="SMART" id="SM00278">
    <property type="entry name" value="HhH1"/>
    <property type="match status" value="2"/>
</dbReference>
<dbReference type="SUPFAM" id="SSF46929">
    <property type="entry name" value="DNA helicase RuvA subunit, C-terminal domain"/>
    <property type="match status" value="1"/>
</dbReference>
<dbReference type="SUPFAM" id="SSF50249">
    <property type="entry name" value="Nucleic acid-binding proteins"/>
    <property type="match status" value="1"/>
</dbReference>
<dbReference type="SUPFAM" id="SSF47781">
    <property type="entry name" value="RuvA domain 2-like"/>
    <property type="match status" value="1"/>
</dbReference>
<evidence type="ECO:0000255" key="1">
    <source>
        <dbReference type="HAMAP-Rule" id="MF_00031"/>
    </source>
</evidence>
<feature type="chain" id="PRO_1000090315" description="Holliday junction branch migration complex subunit RuvA">
    <location>
        <begin position="1"/>
        <end position="203"/>
    </location>
</feature>
<feature type="region of interest" description="Domain I" evidence="1">
    <location>
        <begin position="1"/>
        <end position="64"/>
    </location>
</feature>
<feature type="region of interest" description="Domain II" evidence="1">
    <location>
        <begin position="65"/>
        <end position="142"/>
    </location>
</feature>
<feature type="region of interest" description="Flexible linker" evidence="1">
    <location>
        <begin position="143"/>
        <end position="154"/>
    </location>
</feature>
<feature type="region of interest" description="Domain III" evidence="1">
    <location>
        <begin position="155"/>
        <end position="203"/>
    </location>
</feature>
<name>RUVA_ECOSE</name>
<protein>
    <recommendedName>
        <fullName evidence="1">Holliday junction branch migration complex subunit RuvA</fullName>
    </recommendedName>
</protein>